<accession>Q9LSC4</accession>
<accession>Q8LE96</accession>
<organism>
    <name type="scientific">Arabidopsis thaliana</name>
    <name type="common">Mouse-ear cress</name>
    <dbReference type="NCBI Taxonomy" id="3702"/>
    <lineage>
        <taxon>Eukaryota</taxon>
        <taxon>Viridiplantae</taxon>
        <taxon>Streptophyta</taxon>
        <taxon>Embryophyta</taxon>
        <taxon>Tracheophyta</taxon>
        <taxon>Spermatophyta</taxon>
        <taxon>Magnoliopsida</taxon>
        <taxon>eudicotyledons</taxon>
        <taxon>Gunneridae</taxon>
        <taxon>Pentapetalae</taxon>
        <taxon>rosids</taxon>
        <taxon>malvids</taxon>
        <taxon>Brassicales</taxon>
        <taxon>Brassicaceae</taxon>
        <taxon>Camelineae</taxon>
        <taxon>Arabidopsis</taxon>
    </lineage>
</organism>
<feature type="transit peptide" description="Chloroplast" evidence="2">
    <location>
        <begin position="1"/>
        <end position="47"/>
    </location>
</feature>
<feature type="chain" id="PRO_0000454277" description="Plastoglobule-localized metallopeptidase 48, chloroplastic">
    <location>
        <begin position="48"/>
        <end position="344"/>
    </location>
</feature>
<feature type="transmembrane region" description="Helical" evidence="2">
    <location>
        <begin position="102"/>
        <end position="122"/>
    </location>
</feature>
<feature type="transmembrane region" description="Helical" evidence="2">
    <location>
        <begin position="169"/>
        <end position="189"/>
    </location>
</feature>
<feature type="transmembrane region" description="Helical" evidence="2">
    <location>
        <begin position="201"/>
        <end position="221"/>
    </location>
</feature>
<feature type="transmembrane region" description="Helical" evidence="2">
    <location>
        <begin position="256"/>
        <end position="272"/>
    </location>
</feature>
<feature type="active site" evidence="1">
    <location>
        <position position="192"/>
    </location>
</feature>
<feature type="binding site" evidence="1">
    <location>
        <position position="191"/>
    </location>
    <ligand>
        <name>Zn(2+)</name>
        <dbReference type="ChEBI" id="CHEBI:29105"/>
        <note>catalytic</note>
    </ligand>
</feature>
<feature type="binding site" evidence="1">
    <location>
        <position position="195"/>
    </location>
    <ligand>
        <name>Zn(2+)</name>
        <dbReference type="ChEBI" id="CHEBI:29105"/>
        <note>catalytic</note>
    </ligand>
</feature>
<feature type="binding site" evidence="1">
    <location>
        <position position="240"/>
    </location>
    <ligand>
        <name>Zn(2+)</name>
        <dbReference type="ChEBI" id="CHEBI:29105"/>
        <note>catalytic</note>
    </ligand>
</feature>
<feature type="sequence conflict" description="In Ref. 5; AAM62770." evidence="6" ref="5">
    <original>G</original>
    <variation>A</variation>
    <location>
        <position position="267"/>
    </location>
</feature>
<proteinExistence type="evidence at protein level"/>
<evidence type="ECO:0000250" key="1">
    <source>
        <dbReference type="UniProtKB" id="O75844"/>
    </source>
</evidence>
<evidence type="ECO:0000255" key="2"/>
<evidence type="ECO:0000269" key="3">
    <source>
    </source>
</evidence>
<evidence type="ECO:0000269" key="4">
    <source>
    </source>
</evidence>
<evidence type="ECO:0000303" key="5">
    <source>
    </source>
</evidence>
<evidence type="ECO:0000305" key="6"/>
<evidence type="ECO:0000312" key="7">
    <source>
        <dbReference type="Araport" id="AT3G27110"/>
    </source>
</evidence>
<evidence type="ECO:0000312" key="8">
    <source>
        <dbReference type="EMBL" id="BAB01093.1"/>
    </source>
</evidence>
<protein>
    <recommendedName>
        <fullName evidence="5">Plastoglobule-localized metallopeptidase 48, chloroplastic</fullName>
        <ecNumber evidence="3">3.4.24.-</ecNumber>
    </recommendedName>
</protein>
<sequence length="344" mass="37948">MAVSVSAPVLSLCYNQSGELSRSLGYRLPKKVGFSSGRRSVSYIGFGAEKVGRFRVRVPICRAVPPLLFKDLDADDFRHPFDKQNTLLLRAIPGLNEFGKALLGSMTEQIMLLENIGTSVLVSKNQLSDLHGLLVEAAEILNIEAPDLYVRQSPVPNAYTLAISGKKPFIVVHTSLIELLTSAELQAVLAHELGHLKCDHGVWLTFANILTLGAYTVPAFGQMIARTLEEQLLRWLRSAELTCDRAALLVAQDPKVVVSVLMKLAGGCPSIADQLNVDAFLEQARSYDKASSSPLGWYIRNAQTSQLSHPLPVLRAREIDEWSRSLEYKSLLKRANRKSTVQKV</sequence>
<reference key="1">
    <citation type="journal article" date="2000" name="DNA Res.">
        <title>Structural analysis of Arabidopsis thaliana chromosome 3. I. Sequence features of the regions of 4,504,864 bp covered by sixty P1 and TAC clones.</title>
        <authorList>
            <person name="Sato S."/>
            <person name="Nakamura Y."/>
            <person name="Kaneko T."/>
            <person name="Katoh T."/>
            <person name="Asamizu E."/>
            <person name="Tabata S."/>
        </authorList>
    </citation>
    <scope>NUCLEOTIDE SEQUENCE [LARGE SCALE GENOMIC DNA]</scope>
    <source>
        <strain>cv. Columbia</strain>
    </source>
</reference>
<reference key="2">
    <citation type="journal article" date="2017" name="Plant J.">
        <title>Araport11: a complete reannotation of the Arabidopsis thaliana reference genome.</title>
        <authorList>
            <person name="Cheng C.Y."/>
            <person name="Krishnakumar V."/>
            <person name="Chan A.P."/>
            <person name="Thibaud-Nissen F."/>
            <person name="Schobel S."/>
            <person name="Town C.D."/>
        </authorList>
    </citation>
    <scope>GENOME REANNOTATION</scope>
    <source>
        <strain>cv. Columbia</strain>
    </source>
</reference>
<reference key="3">
    <citation type="journal article" date="2003" name="Science">
        <title>Empirical analysis of transcriptional activity in the Arabidopsis genome.</title>
        <authorList>
            <person name="Yamada K."/>
            <person name="Lim J."/>
            <person name="Dale J.M."/>
            <person name="Chen H."/>
            <person name="Shinn P."/>
            <person name="Palm C.J."/>
            <person name="Southwick A.M."/>
            <person name="Wu H.C."/>
            <person name="Kim C.J."/>
            <person name="Nguyen M."/>
            <person name="Pham P.K."/>
            <person name="Cheuk R.F."/>
            <person name="Karlin-Newmann G."/>
            <person name="Liu S.X."/>
            <person name="Lam B."/>
            <person name="Sakano H."/>
            <person name="Wu T."/>
            <person name="Yu G."/>
            <person name="Miranda M."/>
            <person name="Quach H.L."/>
            <person name="Tripp M."/>
            <person name="Chang C.H."/>
            <person name="Lee J.M."/>
            <person name="Toriumi M.J."/>
            <person name="Chan M.M."/>
            <person name="Tang C.C."/>
            <person name="Onodera C.S."/>
            <person name="Deng J.M."/>
            <person name="Akiyama K."/>
            <person name="Ansari Y."/>
            <person name="Arakawa T."/>
            <person name="Banh J."/>
            <person name="Banno F."/>
            <person name="Bowser L."/>
            <person name="Brooks S.Y."/>
            <person name="Carninci P."/>
            <person name="Chao Q."/>
            <person name="Choy N."/>
            <person name="Enju A."/>
            <person name="Goldsmith A.D."/>
            <person name="Gurjal M."/>
            <person name="Hansen N.F."/>
            <person name="Hayashizaki Y."/>
            <person name="Johnson-Hopson C."/>
            <person name="Hsuan V.W."/>
            <person name="Iida K."/>
            <person name="Karnes M."/>
            <person name="Khan S."/>
            <person name="Koesema E."/>
            <person name="Ishida J."/>
            <person name="Jiang P.X."/>
            <person name="Jones T."/>
            <person name="Kawai J."/>
            <person name="Kamiya A."/>
            <person name="Meyers C."/>
            <person name="Nakajima M."/>
            <person name="Narusaka M."/>
            <person name="Seki M."/>
            <person name="Sakurai T."/>
            <person name="Satou M."/>
            <person name="Tamse R."/>
            <person name="Vaysberg M."/>
            <person name="Wallender E.K."/>
            <person name="Wong C."/>
            <person name="Yamamura Y."/>
            <person name="Yuan S."/>
            <person name="Shinozaki K."/>
            <person name="Davis R.W."/>
            <person name="Theologis A."/>
            <person name="Ecker J.R."/>
        </authorList>
    </citation>
    <scope>NUCLEOTIDE SEQUENCE [LARGE SCALE MRNA]</scope>
    <source>
        <strain>cv. Columbia</strain>
    </source>
</reference>
<reference key="4">
    <citation type="journal article" date="2009" name="DNA Res.">
        <title>Analysis of multiple occurrences of alternative splicing events in Arabidopsis thaliana using novel sequenced full-length cDNAs.</title>
        <authorList>
            <person name="Iida K."/>
            <person name="Fukami-Kobayashi K."/>
            <person name="Toyoda A."/>
            <person name="Sakaki Y."/>
            <person name="Kobayashi M."/>
            <person name="Seki M."/>
            <person name="Shinozaki K."/>
        </authorList>
    </citation>
    <scope>NUCLEOTIDE SEQUENCE [LARGE SCALE MRNA]</scope>
    <source>
        <strain>cv. Columbia</strain>
        <tissue>Rosette leaf</tissue>
    </source>
</reference>
<reference key="5">
    <citation type="submission" date="2002-03" db="EMBL/GenBank/DDBJ databases">
        <title>Full-length cDNA from Arabidopsis thaliana.</title>
        <authorList>
            <person name="Brover V.V."/>
            <person name="Troukhan M.E."/>
            <person name="Alexandrov N.A."/>
            <person name="Lu Y.-P."/>
            <person name="Flavell R.B."/>
            <person name="Feldmann K.A."/>
        </authorList>
    </citation>
    <scope>NUCLEOTIDE SEQUENCE [LARGE SCALE MRNA]</scope>
</reference>
<reference key="6">
    <citation type="journal article" date="2016" name="Plant Cell">
        <title>The plastoglobule-localized metallopeptidase PGM48 is a positive regulator of senescence in Arabidopsis thaliana.</title>
        <authorList>
            <person name="Bhuiyan N.H."/>
            <person name="Friso G."/>
            <person name="Rowland E."/>
            <person name="Majsec K."/>
            <person name="van Wijk K.J."/>
        </authorList>
    </citation>
    <scope>FUNCTION</scope>
    <scope>DISRUPTION PHENOTYPE</scope>
    <scope>SUBCELLULAR LOCATION</scope>
    <scope>COFACTOR</scope>
    <scope>INTERACTION WITH ABC1K3; PES1 AND CCD4</scope>
    <scope>DEVELOPMENTAL STAGE</scope>
</reference>
<reference key="7">
    <citation type="journal article" date="2017" name="Plant Signal. Behav.">
        <title>Functions and substrates of plastoglobule-localized metallopeptidase PGM48.</title>
        <authorList>
            <person name="Bhuiyan N.H."/>
            <person name="van Wijk K.J."/>
        </authorList>
    </citation>
    <scope>FUNCTION</scope>
    <scope>DEVELOPMENTAL STAGE</scope>
    <scope>TISSUE SPECIFICITY</scope>
</reference>
<keyword id="KW-0150">Chloroplast</keyword>
<keyword id="KW-0378">Hydrolase</keyword>
<keyword id="KW-0472">Membrane</keyword>
<keyword id="KW-0479">Metal-binding</keyword>
<keyword id="KW-0482">Metalloprotease</keyword>
<keyword id="KW-0934">Plastid</keyword>
<keyword id="KW-0645">Protease</keyword>
<keyword id="KW-1185">Reference proteome</keyword>
<keyword id="KW-0809">Transit peptide</keyword>
<keyword id="KW-0812">Transmembrane</keyword>
<keyword id="KW-1133">Transmembrane helix</keyword>
<keyword id="KW-0862">Zinc</keyword>
<dbReference type="EC" id="3.4.24.-" evidence="3"/>
<dbReference type="EMBL" id="AB026649">
    <property type="protein sequence ID" value="BAB01093.1"/>
    <property type="molecule type" value="Genomic_DNA"/>
</dbReference>
<dbReference type="EMBL" id="CP002686">
    <property type="protein sequence ID" value="AEE77268.1"/>
    <property type="molecule type" value="Genomic_DNA"/>
</dbReference>
<dbReference type="EMBL" id="CP002686">
    <property type="protein sequence ID" value="AEE77269.1"/>
    <property type="molecule type" value="Genomic_DNA"/>
</dbReference>
<dbReference type="EMBL" id="AY045604">
    <property type="protein sequence ID" value="AAK73962.1"/>
    <property type="molecule type" value="mRNA"/>
</dbReference>
<dbReference type="EMBL" id="BT002704">
    <property type="protein sequence ID" value="AAO11620.1"/>
    <property type="molecule type" value="mRNA"/>
</dbReference>
<dbReference type="EMBL" id="AK316844">
    <property type="protein sequence ID" value="BAH19556.1"/>
    <property type="molecule type" value="mRNA"/>
</dbReference>
<dbReference type="EMBL" id="AY085546">
    <property type="protein sequence ID" value="AAM62770.1"/>
    <property type="molecule type" value="mRNA"/>
</dbReference>
<dbReference type="RefSeq" id="NP_566808.1">
    <property type="nucleotide sequence ID" value="NM_113625.4"/>
</dbReference>
<dbReference type="RefSeq" id="NP_850640.1">
    <property type="nucleotide sequence ID" value="NM_180309.3"/>
</dbReference>
<dbReference type="FunCoup" id="Q9LSC4">
    <property type="interactions" value="58"/>
</dbReference>
<dbReference type="STRING" id="3702.Q9LSC4"/>
<dbReference type="MEROPS" id="M48.021"/>
<dbReference type="PaxDb" id="3702-AT3G27110.1"/>
<dbReference type="ProteomicsDB" id="252049"/>
<dbReference type="EnsemblPlants" id="AT3G27110.1">
    <property type="protein sequence ID" value="AT3G27110.1"/>
    <property type="gene ID" value="AT3G27110"/>
</dbReference>
<dbReference type="EnsemblPlants" id="AT3G27110.2">
    <property type="protein sequence ID" value="AT3G27110.2"/>
    <property type="gene ID" value="AT3G27110"/>
</dbReference>
<dbReference type="GeneID" id="822330"/>
<dbReference type="Gramene" id="AT3G27110.1">
    <property type="protein sequence ID" value="AT3G27110.1"/>
    <property type="gene ID" value="AT3G27110"/>
</dbReference>
<dbReference type="Gramene" id="AT3G27110.2">
    <property type="protein sequence ID" value="AT3G27110.2"/>
    <property type="gene ID" value="AT3G27110"/>
</dbReference>
<dbReference type="KEGG" id="ath:AT3G27110"/>
<dbReference type="Araport" id="AT3G27110"/>
<dbReference type="TAIR" id="AT3G27110">
    <property type="gene designation" value="PGM48"/>
</dbReference>
<dbReference type="eggNOG" id="ENOG502QUG6">
    <property type="taxonomic scope" value="Eukaryota"/>
</dbReference>
<dbReference type="HOGENOM" id="CLU_052979_1_0_1"/>
<dbReference type="InParanoid" id="Q9LSC4"/>
<dbReference type="OMA" id="PNAMCIG"/>
<dbReference type="OrthoDB" id="272500at2759"/>
<dbReference type="PhylomeDB" id="Q9LSC4"/>
<dbReference type="PRO" id="PR:Q9LSC4"/>
<dbReference type="Proteomes" id="UP000006548">
    <property type="component" value="Chromosome 3"/>
</dbReference>
<dbReference type="ExpressionAtlas" id="Q9LSC4">
    <property type="expression patterns" value="baseline and differential"/>
</dbReference>
<dbReference type="GO" id="GO:0031969">
    <property type="term" value="C:chloroplast membrane"/>
    <property type="evidence" value="ECO:0007669"/>
    <property type="project" value="UniProtKB-SubCell"/>
</dbReference>
<dbReference type="GO" id="GO:0010287">
    <property type="term" value="C:plastoglobule"/>
    <property type="evidence" value="ECO:0007669"/>
    <property type="project" value="UniProtKB-SubCell"/>
</dbReference>
<dbReference type="GO" id="GO:0046872">
    <property type="term" value="F:metal ion binding"/>
    <property type="evidence" value="ECO:0007669"/>
    <property type="project" value="UniProtKB-KW"/>
</dbReference>
<dbReference type="GO" id="GO:0004222">
    <property type="term" value="F:metalloendopeptidase activity"/>
    <property type="evidence" value="ECO:0000314"/>
    <property type="project" value="TAIR"/>
</dbReference>
<dbReference type="GO" id="GO:0010150">
    <property type="term" value="P:leaf senescence"/>
    <property type="evidence" value="ECO:0000270"/>
    <property type="project" value="UniProtKB"/>
</dbReference>
<dbReference type="GO" id="GO:0006508">
    <property type="term" value="P:proteolysis"/>
    <property type="evidence" value="ECO:0007669"/>
    <property type="project" value="UniProtKB-KW"/>
</dbReference>
<dbReference type="GO" id="GO:1900055">
    <property type="term" value="P:regulation of leaf senescence"/>
    <property type="evidence" value="ECO:0000314"/>
    <property type="project" value="UniProtKB"/>
</dbReference>
<dbReference type="CDD" id="cd07325">
    <property type="entry name" value="M48_Ste24p_like"/>
    <property type="match status" value="1"/>
</dbReference>
<dbReference type="FunFam" id="3.30.2010.10:FF:000007">
    <property type="entry name" value="Peptidase M48 family protein"/>
    <property type="match status" value="1"/>
</dbReference>
<dbReference type="Gene3D" id="3.30.2010.10">
    <property type="entry name" value="Metalloproteases ('zincins'), catalytic domain"/>
    <property type="match status" value="1"/>
</dbReference>
<dbReference type="InterPro" id="IPR001915">
    <property type="entry name" value="Peptidase_M48"/>
</dbReference>
<dbReference type="PANTHER" id="PTHR10120">
    <property type="entry name" value="CAAX PRENYL PROTEASE 1"/>
    <property type="match status" value="1"/>
</dbReference>
<dbReference type="Pfam" id="PF01435">
    <property type="entry name" value="Peptidase_M48"/>
    <property type="match status" value="1"/>
</dbReference>
<gene>
    <name evidence="5" type="primary">PGM48</name>
    <name evidence="7" type="ordered locus">At3g27110</name>
    <name evidence="8" type="ORF">MOJ10.19</name>
</gene>
<name>PGM48_ARATH</name>
<comment type="function">
    <text evidence="3 4">Metalloendopeptidase with a Zn-dependent proteolytic activity and substrate cleavage upstream of hydrophobic residues (PubMed:27895226). Positive regulator of senescence, probably by degrading CCD4, thus participating in the controlled removal of carotenoids from the thylakoid membrane during the senescence process (PubMed:27895226, PubMed:28534654).</text>
</comment>
<comment type="cofactor">
    <cofactor evidence="3">
        <name>Zn(2+)</name>
        <dbReference type="ChEBI" id="CHEBI:29105"/>
    </cofactor>
    <text evidence="1">Binds 1 zinc ion per subunit.</text>
</comment>
<comment type="subunit">
    <text evidence="3">Interacts with plastoglobule (PG) core proteins ABC1K3, PES1 and CCD4.</text>
</comment>
<comment type="subcellular location">
    <subcellularLocation>
        <location evidence="3">Plastid</location>
        <location evidence="3">Chloroplast</location>
        <location evidence="3">Plastoglobule</location>
    </subcellularLocation>
    <subcellularLocation>
        <location evidence="2">Plastid</location>
        <location evidence="2">Chloroplast membrane</location>
        <topology evidence="2">Multi-pass membrane protein</topology>
    </subcellularLocation>
</comment>
<comment type="tissue specificity">
    <text evidence="4">Mostly expressed in flowers (e.g. sepals, petals and stamen), seeds, leaves and cotyledons.</text>
</comment>
<comment type="developmental stage">
    <text evidence="3 4">Accumulates during leaf senescence.</text>
</comment>
<comment type="disruption phenotype">
    <text evidence="3">Delayed senescence.</text>
</comment>
<comment type="similarity">
    <text>Belongs to the peptidase M48 family. M48D subfamily.</text>
</comment>